<keyword id="KW-1185">Reference proteome</keyword>
<keyword id="KW-0687">Ribonucleoprotein</keyword>
<keyword id="KW-0689">Ribosomal protein</keyword>
<keyword id="KW-0694">RNA-binding</keyword>
<keyword id="KW-0699">rRNA-binding</keyword>
<sequence>MAKAAAPRIRKKERKNIISGVAHVLSTFNNTMITISDAQGNAIAWSSAGAQGFKGSRKSTPYAAQVAAEDAGRKAREHGMETLEIEVSGPGSGRESALRALQAVGFSITSIRDMTPVPHNGCRPRKRRRV</sequence>
<accession>A9H3J3</accession>
<accession>B5ZIS9</accession>
<reference key="1">
    <citation type="journal article" date="2009" name="BMC Genomics">
        <title>Complete genome sequence of the sugarcane nitrogen-fixing endophyte Gluconacetobacter diazotrophicus Pal5.</title>
        <authorList>
            <person name="Bertalan M."/>
            <person name="Albano R."/>
            <person name="de Padua V."/>
            <person name="Rouws L."/>
            <person name="Rojas C."/>
            <person name="Hemerly A."/>
            <person name="Teixeira K."/>
            <person name="Schwab S."/>
            <person name="Araujo J."/>
            <person name="Oliveira A."/>
            <person name="Franca L."/>
            <person name="Magalhaes V."/>
            <person name="Alqueres S."/>
            <person name="Cardoso A."/>
            <person name="Almeida W."/>
            <person name="Loureiro M.M."/>
            <person name="Nogueira E."/>
            <person name="Cidade D."/>
            <person name="Oliveira D."/>
            <person name="Simao T."/>
            <person name="Macedo J."/>
            <person name="Valadao A."/>
            <person name="Dreschsel M."/>
            <person name="Freitas F."/>
            <person name="Vidal M."/>
            <person name="Guedes H."/>
            <person name="Rodrigues E."/>
            <person name="Meneses C."/>
            <person name="Brioso P."/>
            <person name="Pozzer L."/>
            <person name="Figueiredo D."/>
            <person name="Montano H."/>
            <person name="Junior J."/>
            <person name="de Souza Filho G."/>
            <person name="Martin Quintana Flores V."/>
            <person name="Ferreira B."/>
            <person name="Branco A."/>
            <person name="Gonzalez P."/>
            <person name="Guillobel H."/>
            <person name="Lemos M."/>
            <person name="Seibel L."/>
            <person name="Macedo J."/>
            <person name="Alves-Ferreira M."/>
            <person name="Sachetto-Martins G."/>
            <person name="Coelho A."/>
            <person name="Santos E."/>
            <person name="Amaral G."/>
            <person name="Neves A."/>
            <person name="Pacheco A.B."/>
            <person name="Carvalho D."/>
            <person name="Lery L."/>
            <person name="Bisch P."/>
            <person name="Rossle S.C."/>
            <person name="Urmenyi T."/>
            <person name="Rael Pereira A."/>
            <person name="Silva R."/>
            <person name="Rondinelli E."/>
            <person name="von Kruger W."/>
            <person name="Martins O."/>
            <person name="Baldani J.I."/>
            <person name="Ferreira P.C."/>
        </authorList>
    </citation>
    <scope>NUCLEOTIDE SEQUENCE [LARGE SCALE GENOMIC DNA]</scope>
    <source>
        <strain>ATCC 49037 / DSM 5601 / CCUG 37298 / CIP 103539 / LMG 7603 / PAl5</strain>
    </source>
</reference>
<reference key="2">
    <citation type="journal article" date="2010" name="Stand. Genomic Sci.">
        <title>Two genome sequences of the same bacterial strain, Gluconacetobacter diazotrophicus PAl 5, suggest a new standard in genome sequence submission.</title>
        <authorList>
            <person name="Giongo A."/>
            <person name="Tyler H.L."/>
            <person name="Zipperer U.N."/>
            <person name="Triplett E.W."/>
        </authorList>
    </citation>
    <scope>NUCLEOTIDE SEQUENCE [LARGE SCALE GENOMIC DNA]</scope>
    <source>
        <strain>ATCC 49037 / DSM 5601 / CCUG 37298 / CIP 103539 / LMG 7603 / PAl5</strain>
    </source>
</reference>
<name>RS11_GLUDA</name>
<organism>
    <name type="scientific">Gluconacetobacter diazotrophicus (strain ATCC 49037 / DSM 5601 / CCUG 37298 / CIP 103539 / LMG 7603 / PAl5)</name>
    <dbReference type="NCBI Taxonomy" id="272568"/>
    <lineage>
        <taxon>Bacteria</taxon>
        <taxon>Pseudomonadati</taxon>
        <taxon>Pseudomonadota</taxon>
        <taxon>Alphaproteobacteria</taxon>
        <taxon>Acetobacterales</taxon>
        <taxon>Acetobacteraceae</taxon>
        <taxon>Gluconacetobacter</taxon>
    </lineage>
</organism>
<proteinExistence type="inferred from homology"/>
<evidence type="ECO:0000255" key="1">
    <source>
        <dbReference type="HAMAP-Rule" id="MF_01310"/>
    </source>
</evidence>
<evidence type="ECO:0000305" key="2"/>
<gene>
    <name evidence="1" type="primary">rpsK</name>
    <name type="ordered locus">GDI3381</name>
    <name type="ordered locus">Gdia_2989</name>
</gene>
<feature type="chain" id="PRO_1000086192" description="Small ribosomal subunit protein uS11">
    <location>
        <begin position="1"/>
        <end position="130"/>
    </location>
</feature>
<feature type="sequence conflict" description="In Ref. 2; ACI52719." evidence="2" ref="2">
    <original>A</original>
    <variation>V</variation>
    <location>
        <position position="38"/>
    </location>
</feature>
<comment type="function">
    <text evidence="1">Located on the platform of the 30S subunit, it bridges several disparate RNA helices of the 16S rRNA. Forms part of the Shine-Dalgarno cleft in the 70S ribosome.</text>
</comment>
<comment type="subunit">
    <text evidence="1">Part of the 30S ribosomal subunit. Interacts with proteins S7 and S18. Binds to IF-3.</text>
</comment>
<comment type="similarity">
    <text evidence="1">Belongs to the universal ribosomal protein uS11 family.</text>
</comment>
<dbReference type="EMBL" id="AM889285">
    <property type="protein sequence ID" value="CAP57324.1"/>
    <property type="molecule type" value="Genomic_DNA"/>
</dbReference>
<dbReference type="EMBL" id="CP001189">
    <property type="protein sequence ID" value="ACI52719.1"/>
    <property type="molecule type" value="Genomic_DNA"/>
</dbReference>
<dbReference type="RefSeq" id="WP_012227919.1">
    <property type="nucleotide sequence ID" value="NC_010125.1"/>
</dbReference>
<dbReference type="RefSeq" id="WP_012554693.1">
    <property type="nucleotide sequence ID" value="NC_011365.1"/>
</dbReference>
<dbReference type="SMR" id="A9H3J3"/>
<dbReference type="STRING" id="272568.GDI3381"/>
<dbReference type="KEGG" id="gdi:GDI3381"/>
<dbReference type="KEGG" id="gdj:Gdia_2989"/>
<dbReference type="eggNOG" id="COG0100">
    <property type="taxonomic scope" value="Bacteria"/>
</dbReference>
<dbReference type="HOGENOM" id="CLU_072439_5_0_5"/>
<dbReference type="OrthoDB" id="9806415at2"/>
<dbReference type="Proteomes" id="UP000001176">
    <property type="component" value="Chromosome"/>
</dbReference>
<dbReference type="GO" id="GO:1990904">
    <property type="term" value="C:ribonucleoprotein complex"/>
    <property type="evidence" value="ECO:0007669"/>
    <property type="project" value="UniProtKB-KW"/>
</dbReference>
<dbReference type="GO" id="GO:0005840">
    <property type="term" value="C:ribosome"/>
    <property type="evidence" value="ECO:0007669"/>
    <property type="project" value="UniProtKB-KW"/>
</dbReference>
<dbReference type="GO" id="GO:0019843">
    <property type="term" value="F:rRNA binding"/>
    <property type="evidence" value="ECO:0007669"/>
    <property type="project" value="UniProtKB-UniRule"/>
</dbReference>
<dbReference type="GO" id="GO:0003735">
    <property type="term" value="F:structural constituent of ribosome"/>
    <property type="evidence" value="ECO:0007669"/>
    <property type="project" value="InterPro"/>
</dbReference>
<dbReference type="GO" id="GO:0006412">
    <property type="term" value="P:translation"/>
    <property type="evidence" value="ECO:0007669"/>
    <property type="project" value="UniProtKB-UniRule"/>
</dbReference>
<dbReference type="FunFam" id="3.30.420.80:FF:000001">
    <property type="entry name" value="30S ribosomal protein S11"/>
    <property type="match status" value="1"/>
</dbReference>
<dbReference type="Gene3D" id="3.30.420.80">
    <property type="entry name" value="Ribosomal protein S11"/>
    <property type="match status" value="1"/>
</dbReference>
<dbReference type="HAMAP" id="MF_01310">
    <property type="entry name" value="Ribosomal_uS11"/>
    <property type="match status" value="1"/>
</dbReference>
<dbReference type="InterPro" id="IPR001971">
    <property type="entry name" value="Ribosomal_uS11"/>
</dbReference>
<dbReference type="InterPro" id="IPR019981">
    <property type="entry name" value="Ribosomal_uS11_bac-type"/>
</dbReference>
<dbReference type="InterPro" id="IPR018102">
    <property type="entry name" value="Ribosomal_uS11_CS"/>
</dbReference>
<dbReference type="InterPro" id="IPR036967">
    <property type="entry name" value="Ribosomal_uS11_sf"/>
</dbReference>
<dbReference type="NCBIfam" id="NF003698">
    <property type="entry name" value="PRK05309.1"/>
    <property type="match status" value="1"/>
</dbReference>
<dbReference type="NCBIfam" id="TIGR03632">
    <property type="entry name" value="uS11_bact"/>
    <property type="match status" value="1"/>
</dbReference>
<dbReference type="PANTHER" id="PTHR11759">
    <property type="entry name" value="40S RIBOSOMAL PROTEIN S14/30S RIBOSOMAL PROTEIN S11"/>
    <property type="match status" value="1"/>
</dbReference>
<dbReference type="Pfam" id="PF00411">
    <property type="entry name" value="Ribosomal_S11"/>
    <property type="match status" value="1"/>
</dbReference>
<dbReference type="PIRSF" id="PIRSF002131">
    <property type="entry name" value="Ribosomal_S11"/>
    <property type="match status" value="1"/>
</dbReference>
<dbReference type="SUPFAM" id="SSF53137">
    <property type="entry name" value="Translational machinery components"/>
    <property type="match status" value="1"/>
</dbReference>
<dbReference type="PROSITE" id="PS00054">
    <property type="entry name" value="RIBOSOMAL_S11"/>
    <property type="match status" value="1"/>
</dbReference>
<protein>
    <recommendedName>
        <fullName evidence="1">Small ribosomal subunit protein uS11</fullName>
    </recommendedName>
    <alternativeName>
        <fullName evidence="2">30S ribosomal protein S11</fullName>
    </alternativeName>
</protein>